<feature type="chain" id="PRO_0000365893" description="ATP synthase subunit c">
    <location>
        <begin position="1"/>
        <end position="84"/>
    </location>
</feature>
<feature type="transmembrane region" description="Helical" evidence="1">
    <location>
        <begin position="9"/>
        <end position="29"/>
    </location>
</feature>
<feature type="transmembrane region" description="Helical" evidence="1">
    <location>
        <begin position="57"/>
        <end position="77"/>
    </location>
</feature>
<feature type="site" description="Reversibly protonated during proton transport" evidence="1">
    <location>
        <position position="64"/>
    </location>
</feature>
<organism>
    <name type="scientific">Lawsonia intracellularis (strain PHE/MN1-00)</name>
    <dbReference type="NCBI Taxonomy" id="363253"/>
    <lineage>
        <taxon>Bacteria</taxon>
        <taxon>Pseudomonadati</taxon>
        <taxon>Thermodesulfobacteriota</taxon>
        <taxon>Desulfovibrionia</taxon>
        <taxon>Desulfovibrionales</taxon>
        <taxon>Desulfovibrionaceae</taxon>
        <taxon>Lawsonia</taxon>
    </lineage>
</organism>
<protein>
    <recommendedName>
        <fullName evidence="1">ATP synthase subunit c</fullName>
    </recommendedName>
    <alternativeName>
        <fullName evidence="1">ATP synthase F(0) sector subunit c</fullName>
    </alternativeName>
    <alternativeName>
        <fullName evidence="1">F-type ATPase subunit c</fullName>
        <shortName evidence="1">F-ATPase subunit c</shortName>
    </alternativeName>
    <alternativeName>
        <fullName evidence="1">Lipid-binding protein</fullName>
    </alternativeName>
</protein>
<keyword id="KW-0066">ATP synthesis</keyword>
<keyword id="KW-1003">Cell membrane</keyword>
<keyword id="KW-0138">CF(0)</keyword>
<keyword id="KW-0375">Hydrogen ion transport</keyword>
<keyword id="KW-0406">Ion transport</keyword>
<keyword id="KW-0446">Lipid-binding</keyword>
<keyword id="KW-0472">Membrane</keyword>
<keyword id="KW-1185">Reference proteome</keyword>
<keyword id="KW-0812">Transmembrane</keyword>
<keyword id="KW-1133">Transmembrane helix</keyword>
<keyword id="KW-0813">Transport</keyword>
<accession>Q1MPG5</accession>
<sequence>MVKLDPSSLGLAIFGCAIGMALAALGCGIGQGLGLKGACEGIARNPEASGKIQVALILGLAFIESLAIYALVINLIILFANPFV</sequence>
<dbReference type="EMBL" id="AM180252">
    <property type="protein sequence ID" value="CAJ55112.1"/>
    <property type="status" value="ALT_INIT"/>
    <property type="molecule type" value="Genomic_DNA"/>
</dbReference>
<dbReference type="RefSeq" id="WP_011527141.1">
    <property type="nucleotide sequence ID" value="NC_008011.1"/>
</dbReference>
<dbReference type="SMR" id="Q1MPG5"/>
<dbReference type="STRING" id="363253.LI1058"/>
<dbReference type="KEGG" id="lip:LI1058"/>
<dbReference type="eggNOG" id="COG0636">
    <property type="taxonomic scope" value="Bacteria"/>
</dbReference>
<dbReference type="HOGENOM" id="CLU_148047_0_0_7"/>
<dbReference type="OrthoDB" id="5296711at2"/>
<dbReference type="Proteomes" id="UP000002430">
    <property type="component" value="Chromosome"/>
</dbReference>
<dbReference type="GO" id="GO:0005886">
    <property type="term" value="C:plasma membrane"/>
    <property type="evidence" value="ECO:0007669"/>
    <property type="project" value="UniProtKB-SubCell"/>
</dbReference>
<dbReference type="GO" id="GO:0045259">
    <property type="term" value="C:proton-transporting ATP synthase complex"/>
    <property type="evidence" value="ECO:0007669"/>
    <property type="project" value="UniProtKB-KW"/>
</dbReference>
<dbReference type="GO" id="GO:0033177">
    <property type="term" value="C:proton-transporting two-sector ATPase complex, proton-transporting domain"/>
    <property type="evidence" value="ECO:0007669"/>
    <property type="project" value="InterPro"/>
</dbReference>
<dbReference type="GO" id="GO:0008289">
    <property type="term" value="F:lipid binding"/>
    <property type="evidence" value="ECO:0007669"/>
    <property type="project" value="UniProtKB-KW"/>
</dbReference>
<dbReference type="GO" id="GO:0046933">
    <property type="term" value="F:proton-transporting ATP synthase activity, rotational mechanism"/>
    <property type="evidence" value="ECO:0007669"/>
    <property type="project" value="UniProtKB-UniRule"/>
</dbReference>
<dbReference type="CDD" id="cd18121">
    <property type="entry name" value="ATP-synt_Fo_c"/>
    <property type="match status" value="1"/>
</dbReference>
<dbReference type="FunFam" id="1.20.20.10:FF:000002">
    <property type="entry name" value="ATP synthase subunit c"/>
    <property type="match status" value="1"/>
</dbReference>
<dbReference type="Gene3D" id="1.20.120.610">
    <property type="entry name" value="lithium bound rotor ring of v- atpase"/>
    <property type="match status" value="1"/>
</dbReference>
<dbReference type="HAMAP" id="MF_01396">
    <property type="entry name" value="ATP_synth_c_bact"/>
    <property type="match status" value="1"/>
</dbReference>
<dbReference type="InterPro" id="IPR005953">
    <property type="entry name" value="ATP_synth_csu_bac/chlpt"/>
</dbReference>
<dbReference type="InterPro" id="IPR000454">
    <property type="entry name" value="ATP_synth_F0_csu"/>
</dbReference>
<dbReference type="InterPro" id="IPR020537">
    <property type="entry name" value="ATP_synth_F0_csu_DDCD_BS"/>
</dbReference>
<dbReference type="InterPro" id="IPR002379">
    <property type="entry name" value="ATPase_proteolipid_c-like_dom"/>
</dbReference>
<dbReference type="InterPro" id="IPR035921">
    <property type="entry name" value="F/V-ATP_Csub_sf"/>
</dbReference>
<dbReference type="NCBIfam" id="TIGR01260">
    <property type="entry name" value="ATP_synt_c"/>
    <property type="match status" value="1"/>
</dbReference>
<dbReference type="PANTHER" id="PTHR10031">
    <property type="entry name" value="ATP SYNTHASE LIPID-BINDING PROTEIN, MITOCHONDRIAL"/>
    <property type="match status" value="1"/>
</dbReference>
<dbReference type="PANTHER" id="PTHR10031:SF0">
    <property type="entry name" value="ATPASE PROTEIN 9"/>
    <property type="match status" value="1"/>
</dbReference>
<dbReference type="Pfam" id="PF00137">
    <property type="entry name" value="ATP-synt_C"/>
    <property type="match status" value="1"/>
</dbReference>
<dbReference type="PRINTS" id="PR00124">
    <property type="entry name" value="ATPASEC"/>
</dbReference>
<dbReference type="SUPFAM" id="SSF81333">
    <property type="entry name" value="F1F0 ATP synthase subunit C"/>
    <property type="match status" value="1"/>
</dbReference>
<dbReference type="PROSITE" id="PS00605">
    <property type="entry name" value="ATPASE_C"/>
    <property type="match status" value="1"/>
</dbReference>
<comment type="function">
    <text evidence="1">F(1)F(0) ATP synthase produces ATP from ADP in the presence of a proton or sodium gradient. F-type ATPases consist of two structural domains, F(1) containing the extramembraneous catalytic core and F(0) containing the membrane proton channel, linked together by a central stalk and a peripheral stalk. During catalysis, ATP synthesis in the catalytic domain of F(1) is coupled via a rotary mechanism of the central stalk subunits to proton translocation.</text>
</comment>
<comment type="function">
    <text evidence="1">Key component of the F(0) channel; it plays a direct role in translocation across the membrane. A homomeric c-ring of between 10-14 subunits forms the central stalk rotor element with the F(1) delta and epsilon subunits.</text>
</comment>
<comment type="subunit">
    <text evidence="1">F-type ATPases have 2 components, F(1) - the catalytic core - and F(0) - the membrane proton channel. F(1) has five subunits: alpha(3), beta(3), gamma(1), delta(1), epsilon(1). F(0) has three main subunits: a(1), b(2) and c(10-14). The alpha and beta chains form an alternating ring which encloses part of the gamma chain. F(1) is attached to F(0) by a central stalk formed by the gamma and epsilon chains, while a peripheral stalk is formed by the delta and b chains.</text>
</comment>
<comment type="subcellular location">
    <subcellularLocation>
        <location evidence="1">Cell membrane</location>
        <topology evidence="1">Multi-pass membrane protein</topology>
    </subcellularLocation>
</comment>
<comment type="similarity">
    <text evidence="1">Belongs to the ATPase C chain family.</text>
</comment>
<comment type="sequence caution" evidence="2">
    <conflict type="erroneous initiation">
        <sequence resource="EMBL-CDS" id="CAJ55112"/>
    </conflict>
</comment>
<gene>
    <name evidence="1" type="primary">atpE</name>
    <name type="ordered locus">LI1058</name>
</gene>
<evidence type="ECO:0000255" key="1">
    <source>
        <dbReference type="HAMAP-Rule" id="MF_01396"/>
    </source>
</evidence>
<evidence type="ECO:0000305" key="2"/>
<proteinExistence type="inferred from homology"/>
<name>ATPL_LAWIP</name>
<reference key="1">
    <citation type="submission" date="2005-11" db="EMBL/GenBank/DDBJ databases">
        <title>The complete genome sequence of Lawsonia intracellularis: the causative agent of proliferative enteropathy.</title>
        <authorList>
            <person name="Kaur K."/>
            <person name="Zhang Q."/>
            <person name="Beckler D."/>
            <person name="Munir S."/>
            <person name="Li L."/>
            <person name="Kinsley K."/>
            <person name="Herron L."/>
            <person name="Peterson A."/>
            <person name="May B."/>
            <person name="Singh S."/>
            <person name="Gebhart C."/>
            <person name="Kapur V."/>
        </authorList>
    </citation>
    <scope>NUCLEOTIDE SEQUENCE [LARGE SCALE GENOMIC DNA]</scope>
    <source>
        <strain>PHE/MN1-00</strain>
    </source>
</reference>